<sequence length="228" mass="24428">MIIITPITNDPTTALLRLMAWLSPVFPVGSFSYSHGLERAVHDGLVVDAAGLQDWLQWLVRRGSGWNDAVLCAESWRCAMKGEDLHEIAELAEALAGSRERHMETMLQGGAFLAAARSWPCEIFDRLPPDCAYPVAVGAVAGGHGVPLAQALAAFLQAFCINLLQASIRLSVTGQSGVTAIMAALEPVLGETAARAALSSMEDLGSATFIADIMAMKHETQHSRLFRS</sequence>
<gene>
    <name evidence="1" type="primary">ureF1</name>
    <name type="ordered locus">BR0272</name>
    <name type="ordered locus">BS1330_I0273</name>
</gene>
<feature type="chain" id="PRO_0000344092" description="Urease accessory protein UreF 1">
    <location>
        <begin position="1"/>
        <end position="228"/>
    </location>
</feature>
<dbReference type="EMBL" id="AE014291">
    <property type="protein sequence ID" value="AAN29221.1"/>
    <property type="molecule type" value="Genomic_DNA"/>
</dbReference>
<dbReference type="EMBL" id="CP002997">
    <property type="protein sequence ID" value="AEM17634.1"/>
    <property type="molecule type" value="Genomic_DNA"/>
</dbReference>
<dbReference type="RefSeq" id="WP_004690532.1">
    <property type="nucleotide sequence ID" value="NZ_KN046804.1"/>
</dbReference>
<dbReference type="SMR" id="Q8G2P6"/>
<dbReference type="KEGG" id="bms:BR0272"/>
<dbReference type="KEGG" id="bsi:BS1330_I0273"/>
<dbReference type="PATRIC" id="fig|204722.21.peg.1755"/>
<dbReference type="HOGENOM" id="CLU_049215_2_0_5"/>
<dbReference type="PhylomeDB" id="Q8G2P6"/>
<dbReference type="Proteomes" id="UP000007104">
    <property type="component" value="Chromosome I"/>
</dbReference>
<dbReference type="GO" id="GO:0005737">
    <property type="term" value="C:cytoplasm"/>
    <property type="evidence" value="ECO:0007669"/>
    <property type="project" value="UniProtKB-SubCell"/>
</dbReference>
<dbReference type="GO" id="GO:0016151">
    <property type="term" value="F:nickel cation binding"/>
    <property type="evidence" value="ECO:0007669"/>
    <property type="project" value="UniProtKB-UniRule"/>
</dbReference>
<dbReference type="Gene3D" id="1.10.4190.10">
    <property type="entry name" value="Urease accessory protein UreF"/>
    <property type="match status" value="1"/>
</dbReference>
<dbReference type="HAMAP" id="MF_01385">
    <property type="entry name" value="UreF"/>
    <property type="match status" value="1"/>
</dbReference>
<dbReference type="InterPro" id="IPR002639">
    <property type="entry name" value="UreF"/>
</dbReference>
<dbReference type="InterPro" id="IPR038277">
    <property type="entry name" value="UreF_sf"/>
</dbReference>
<dbReference type="PANTHER" id="PTHR33620">
    <property type="entry name" value="UREASE ACCESSORY PROTEIN F"/>
    <property type="match status" value="1"/>
</dbReference>
<dbReference type="PANTHER" id="PTHR33620:SF1">
    <property type="entry name" value="UREASE ACCESSORY PROTEIN F"/>
    <property type="match status" value="1"/>
</dbReference>
<dbReference type="Pfam" id="PF01730">
    <property type="entry name" value="UreF"/>
    <property type="match status" value="1"/>
</dbReference>
<dbReference type="PIRSF" id="PIRSF009467">
    <property type="entry name" value="Ureas_acces_UreF"/>
    <property type="match status" value="1"/>
</dbReference>
<keyword id="KW-0143">Chaperone</keyword>
<keyword id="KW-0963">Cytoplasm</keyword>
<keyword id="KW-0996">Nickel insertion</keyword>
<keyword id="KW-0843">Virulence</keyword>
<protein>
    <recommendedName>
        <fullName evidence="1">Urease accessory protein UreF 1</fullName>
    </recommendedName>
</protein>
<name>UREF1_BRUSU</name>
<accession>Q8G2P6</accession>
<accession>G0KBX1</accession>
<comment type="function">
    <text evidence="1">Required for maturation of urease via the functional incorporation of the urease nickel metallocenter.</text>
</comment>
<comment type="function">
    <text evidence="2">Disrupting the ure1 operon causes loss of urease activity, decreased resistance to low pH killing in vitro and decreased pathogen survival when inoculated in BALB/c mice by gavage.</text>
</comment>
<comment type="subunit">
    <text evidence="1">UreD, UreF and UreG form a complex that acts as a GTP-hydrolysis-dependent molecular chaperone, activating the urease apoprotein by helping to assemble the nickel containing metallocenter of UreC. The UreE protein probably delivers the nickel.</text>
</comment>
<comment type="subcellular location">
    <subcellularLocation>
        <location evidence="1">Cytoplasm</location>
    </subcellularLocation>
</comment>
<comment type="similarity">
    <text evidence="1">Belongs to the UreF family.</text>
</comment>
<proteinExistence type="inferred from homology"/>
<organism>
    <name type="scientific">Brucella suis biovar 1 (strain 1330)</name>
    <dbReference type="NCBI Taxonomy" id="204722"/>
    <lineage>
        <taxon>Bacteria</taxon>
        <taxon>Pseudomonadati</taxon>
        <taxon>Pseudomonadota</taxon>
        <taxon>Alphaproteobacteria</taxon>
        <taxon>Hyphomicrobiales</taxon>
        <taxon>Brucellaceae</taxon>
        <taxon>Brucella/Ochrobactrum group</taxon>
        <taxon>Brucella</taxon>
    </lineage>
</organism>
<reference key="1">
    <citation type="journal article" date="2002" name="Proc. Natl. Acad. Sci. U.S.A.">
        <title>The Brucella suis genome reveals fundamental similarities between animal and plant pathogens and symbionts.</title>
        <authorList>
            <person name="Paulsen I.T."/>
            <person name="Seshadri R."/>
            <person name="Nelson K.E."/>
            <person name="Eisen J.A."/>
            <person name="Heidelberg J.F."/>
            <person name="Read T.D."/>
            <person name="Dodson R.J."/>
            <person name="Umayam L.A."/>
            <person name="Brinkac L.M."/>
            <person name="Beanan M.J."/>
            <person name="Daugherty S.C."/>
            <person name="DeBoy R.T."/>
            <person name="Durkin A.S."/>
            <person name="Kolonay J.F."/>
            <person name="Madupu R."/>
            <person name="Nelson W.C."/>
            <person name="Ayodeji B."/>
            <person name="Kraul M."/>
            <person name="Shetty J."/>
            <person name="Malek J.A."/>
            <person name="Van Aken S.E."/>
            <person name="Riedmuller S."/>
            <person name="Tettelin H."/>
            <person name="Gill S.R."/>
            <person name="White O."/>
            <person name="Salzberg S.L."/>
            <person name="Hoover D.L."/>
            <person name="Lindler L.E."/>
            <person name="Halling S.M."/>
            <person name="Boyle S.M."/>
            <person name="Fraser C.M."/>
        </authorList>
    </citation>
    <scope>NUCLEOTIDE SEQUENCE [LARGE SCALE GENOMIC DNA]</scope>
    <source>
        <strain>1330</strain>
    </source>
</reference>
<reference key="2">
    <citation type="journal article" date="2011" name="J. Bacteriol.">
        <title>Revised genome sequence of Brucella suis 1330.</title>
        <authorList>
            <person name="Tae H."/>
            <person name="Shallom S."/>
            <person name="Settlage R."/>
            <person name="Preston D."/>
            <person name="Adams L.G."/>
            <person name="Garner H.R."/>
        </authorList>
    </citation>
    <scope>NUCLEOTIDE SEQUENCE [LARGE SCALE GENOMIC DNA]</scope>
    <source>
        <strain>1330</strain>
    </source>
</reference>
<reference key="3">
    <citation type="journal article" date="2007" name="BMC Microbiol.">
        <title>Brucella suis urease encoded by ure1 but not ure2 is necessary for intestinal infection of BALB/c mice.</title>
        <authorList>
            <person name="Bandara A.B."/>
            <person name="Contreras A."/>
            <person name="Contreras-Rodriguez A."/>
            <person name="Martins A.M."/>
            <person name="Dobrean V."/>
            <person name="Poff-Reichow S."/>
            <person name="Rajasekaran P."/>
            <person name="Sriranganathan N."/>
            <person name="Schurig G.G."/>
            <person name="Boyle S.M."/>
        </authorList>
    </citation>
    <scope>OPERON DISRUPTION</scope>
    <scope>ROLE IN VIRULENCE</scope>
    <source>
        <strain>1330</strain>
    </source>
</reference>
<evidence type="ECO:0000255" key="1">
    <source>
        <dbReference type="HAMAP-Rule" id="MF_01385"/>
    </source>
</evidence>
<evidence type="ECO:0000269" key="2">
    <source>
    </source>
</evidence>